<sequence>MSDSVILRSVKKFGEENHGFESDGSYNNEKKSRLQDKKKSDSVRIGFFQLFRFSSWTDIWLMCMGSLCACIHGIAQPGVLLIFGTMTDVFIDYDTELQELKIPGKACVNNTIVWINSSLNQNVTNGTRCGLLDIESEMIRFAGYYAGIGIAVLTTGYIQICFWGIAAAHQIQKMRKSYFRKIMRMGIGWVDCNSVGKLNTPFSVDFNKINDSSADQLAIFIQGMTSPIFGFLVGFSQWWKLTLVIISVSPLIGLGAAIIGLSVSKFTDYELKAYAKAGSVADEVISSMRTVAAFGGEKKEVERYEKNLVFAQRWGIRKGIVMGFFTGYMWCLIFFCYALAFWYGSKLVLEEGEYSPGALVQIFLSVIIGALNLGNASPCLEAFAAGRAAASSIFETIDRKPIIDCMSEDGYKLERIKGEIEFHNVTFHYPSRPEVKILNNLSMVIKPGEMTALVGPSGAGKSTALQLIHRFYGPTEGMVTVESHDIRSSHIQWLRNQIGIVEQEPVLFFHTIAEKIRYGREDATMEDLIQAAKEANAYNFIMDLPQQFDTLVGEGGGQMSGGQKQRVAIARALIRNPKILLLDMATSALDNESEAMVQEALSKTQHGHTIVSVAHRPATIRTADVIIGCEHGAAVERGTEEELLERKGVYFALVTLQSQRNQGDQEENEKDATEDDIPEKTFSRGNYQDSLRASLRQRSKSQLSYLAHEPPMAVEDHKSTHEEDRKDKDLPAQEDIEPASVRRIMKLNAPEWPYMLLGSMGAAVNGAVTPLYAFLFSQILGTFSLPDKEEQRSQINGICLLFVTLGCVSFFTQFLQGYTFAKSGELLTKRLRKFGFRAMLGQDIGWFDDLRNSPGALTTRLATDASQVQGATGSQIGMMVNSFTNVTVAMIIAFLFSWKLTLGIVCFFPFLALSGALQTKMLTGFASRDKQALEKAGQITSEALSNIRTVAGIGKERKFIETFEAELEKPYKMAIKKANVYGLCFGFSQCITFIANSASYRYGGYLISNEGLHFSYVFRVISAVVLSATALGRASSYTPSYAKAKISAARFFQLLDRQPPINVYSSAGEKWDNFQGKIDFVDCKFTYPSRPDIQVLNGLSVSMSPRQTLAFVGSSGCGKSTSIQLLERFYDPDHGKVMIDGHDSRKVNIQFLRSNIGIVSQEPVLFACSIKDNIKYGDNTQEIPMERIIAAAKKAQVHDFVMSLPEKYETNVGSQGSQLSRGEKQRIAIARAIVRDPKILLLDEATSALDTESEKTVQVALDKAREGRTCIVIAHRLSTIQNSDIIAVMSQGMVIEKGTHEELMVQKGAYYKLVTTGSPIS</sequence>
<reference key="1">
    <citation type="submission" date="2000-03" db="EMBL/GenBank/DDBJ databases">
        <title>Molecular cloning and characterization of rabbit liver bile salt export pump (Bsep/spgp).</title>
        <authorList>
            <person name="Balasubramanian N.V."/>
            <person name="Suchy F.J."/>
            <person name="Ananthanarayanan M."/>
        </authorList>
    </citation>
    <scope>NUCLEOTIDE SEQUENCE [MRNA]</scope>
    <source>
        <strain>New Zealand white</strain>
        <tissue>Liver</tissue>
    </source>
</reference>
<accession>Q9N0V3</accession>
<comment type="function">
    <text evidence="3">Catalyzes the transport of the major hydrophobic bile salts, such as taurine and glycine-conjugated cholic acid across the canalicular membrane of hepatocytes in an ATP-dependent manner, therefore participates in hepatic bile acid homeostasis and consequently to lipid homeostasis through regulation of biliary lipid secretion in a bile salts dependent manner. Transports taurine-conjugated bile salts more rapidly than glycine-conjugated bile salts. Also transports non-bile acid compounds, such as pravastatin and fexofenadine in an ATP-dependent manner and may be involved in their biliary excretion.</text>
</comment>
<comment type="catalytic activity">
    <reaction evidence="3">
        <text>cholate(in) + ATP + H2O = cholate(out) + ADP + phosphate + H(+)</text>
        <dbReference type="Rhea" id="RHEA:50048"/>
        <dbReference type="ChEBI" id="CHEBI:15377"/>
        <dbReference type="ChEBI" id="CHEBI:15378"/>
        <dbReference type="ChEBI" id="CHEBI:29747"/>
        <dbReference type="ChEBI" id="CHEBI:30616"/>
        <dbReference type="ChEBI" id="CHEBI:43474"/>
        <dbReference type="ChEBI" id="CHEBI:456216"/>
    </reaction>
    <physiologicalReaction direction="left-to-right" evidence="3">
        <dbReference type="Rhea" id="RHEA:50049"/>
    </physiologicalReaction>
</comment>
<comment type="catalytic activity">
    <reaction evidence="3">
        <text>taurocholate(in) + ATP + H2O = taurocholate(out) + ADP + phosphate + H(+)</text>
        <dbReference type="Rhea" id="RHEA:50052"/>
        <dbReference type="ChEBI" id="CHEBI:15377"/>
        <dbReference type="ChEBI" id="CHEBI:15378"/>
        <dbReference type="ChEBI" id="CHEBI:30616"/>
        <dbReference type="ChEBI" id="CHEBI:36257"/>
        <dbReference type="ChEBI" id="CHEBI:43474"/>
        <dbReference type="ChEBI" id="CHEBI:456216"/>
    </reaction>
    <physiologicalReaction direction="left-to-right" evidence="3">
        <dbReference type="Rhea" id="RHEA:50053"/>
    </physiologicalReaction>
</comment>
<comment type="catalytic activity">
    <reaction evidence="3">
        <text>glycocholate(in) + ATP + H2O = glycocholate(out) + ADP + phosphate + H(+)</text>
        <dbReference type="Rhea" id="RHEA:50056"/>
        <dbReference type="ChEBI" id="CHEBI:15377"/>
        <dbReference type="ChEBI" id="CHEBI:15378"/>
        <dbReference type="ChEBI" id="CHEBI:29746"/>
        <dbReference type="ChEBI" id="CHEBI:30616"/>
        <dbReference type="ChEBI" id="CHEBI:43474"/>
        <dbReference type="ChEBI" id="CHEBI:456216"/>
    </reaction>
    <physiologicalReaction direction="left-to-right" evidence="3">
        <dbReference type="Rhea" id="RHEA:50057"/>
    </physiologicalReaction>
</comment>
<comment type="catalytic activity">
    <reaction evidence="3">
        <text>glycochenodeoxycholate(in) + ATP + H2O = glycochenodeoxycholate(out) + ADP + phosphate + H(+)</text>
        <dbReference type="Rhea" id="RHEA:50060"/>
        <dbReference type="ChEBI" id="CHEBI:15377"/>
        <dbReference type="ChEBI" id="CHEBI:15378"/>
        <dbReference type="ChEBI" id="CHEBI:30616"/>
        <dbReference type="ChEBI" id="CHEBI:36252"/>
        <dbReference type="ChEBI" id="CHEBI:43474"/>
        <dbReference type="ChEBI" id="CHEBI:456216"/>
    </reaction>
    <physiologicalReaction direction="left-to-right" evidence="3">
        <dbReference type="Rhea" id="RHEA:50061"/>
    </physiologicalReaction>
</comment>
<comment type="catalytic activity">
    <reaction evidence="3">
        <text>taurochenodeoxycholate(in) + ATP + H2O = taurochenodeoxycholate(out) + ADP + phosphate + H(+)</text>
        <dbReference type="Rhea" id="RHEA:50064"/>
        <dbReference type="ChEBI" id="CHEBI:9407"/>
        <dbReference type="ChEBI" id="CHEBI:15377"/>
        <dbReference type="ChEBI" id="CHEBI:15378"/>
        <dbReference type="ChEBI" id="CHEBI:30616"/>
        <dbReference type="ChEBI" id="CHEBI:43474"/>
        <dbReference type="ChEBI" id="CHEBI:456216"/>
    </reaction>
    <physiologicalReaction direction="left-to-right" evidence="3">
        <dbReference type="Rhea" id="RHEA:50065"/>
    </physiologicalReaction>
</comment>
<comment type="catalytic activity">
    <reaction evidence="3">
        <text>glycoursodeoxycholate(in) + ATP + H2O = glycoursodeoxycholate(out) + ADP + phosphate + H(+)</text>
        <dbReference type="Rhea" id="RHEA:50068"/>
        <dbReference type="ChEBI" id="CHEBI:15377"/>
        <dbReference type="ChEBI" id="CHEBI:15378"/>
        <dbReference type="ChEBI" id="CHEBI:30616"/>
        <dbReference type="ChEBI" id="CHEBI:43474"/>
        <dbReference type="ChEBI" id="CHEBI:132030"/>
        <dbReference type="ChEBI" id="CHEBI:456216"/>
    </reaction>
    <physiologicalReaction direction="left-to-right" evidence="3">
        <dbReference type="Rhea" id="RHEA:50069"/>
    </physiologicalReaction>
</comment>
<comment type="catalytic activity">
    <reaction evidence="3">
        <text>tauroursodeoxycholate(in) + ATP + H2O = tauroursodeoxycholate(out) + ADP + phosphate + H(+)</text>
        <dbReference type="Rhea" id="RHEA:50072"/>
        <dbReference type="ChEBI" id="CHEBI:15377"/>
        <dbReference type="ChEBI" id="CHEBI:15378"/>
        <dbReference type="ChEBI" id="CHEBI:30616"/>
        <dbReference type="ChEBI" id="CHEBI:43474"/>
        <dbReference type="ChEBI" id="CHEBI:132028"/>
        <dbReference type="ChEBI" id="CHEBI:456216"/>
    </reaction>
    <physiologicalReaction direction="left-to-right" evidence="3">
        <dbReference type="Rhea" id="RHEA:50073"/>
    </physiologicalReaction>
</comment>
<comment type="catalytic activity">
    <reaction evidence="3">
        <text>taurodeoxycholate(in) + ATP + H2O = taurodeoxycholate(out) + ADP + phosphate + H(+)</text>
        <dbReference type="Rhea" id="RHEA:50080"/>
        <dbReference type="ChEBI" id="CHEBI:15377"/>
        <dbReference type="ChEBI" id="CHEBI:15378"/>
        <dbReference type="ChEBI" id="CHEBI:30616"/>
        <dbReference type="ChEBI" id="CHEBI:36261"/>
        <dbReference type="ChEBI" id="CHEBI:43474"/>
        <dbReference type="ChEBI" id="CHEBI:456216"/>
    </reaction>
    <physiologicalReaction direction="left-to-right" evidence="3">
        <dbReference type="Rhea" id="RHEA:50081"/>
    </physiologicalReaction>
</comment>
<comment type="catalytic activity">
    <reaction evidence="3">
        <text>taurolithocholate 3-sulfate(in) + ATP + H2O = taurolithocholate 3-sulfate(out) + ADP + phosphate + H(+)</text>
        <dbReference type="Rhea" id="RHEA:50084"/>
        <dbReference type="ChEBI" id="CHEBI:15377"/>
        <dbReference type="ChEBI" id="CHEBI:15378"/>
        <dbReference type="ChEBI" id="CHEBI:30616"/>
        <dbReference type="ChEBI" id="CHEBI:43474"/>
        <dbReference type="ChEBI" id="CHEBI:58301"/>
        <dbReference type="ChEBI" id="CHEBI:456216"/>
    </reaction>
    <physiologicalReaction direction="left-to-right" evidence="3">
        <dbReference type="Rhea" id="RHEA:50085"/>
    </physiologicalReaction>
</comment>
<comment type="catalytic activity">
    <reaction evidence="3">
        <text>pravastatin(in) + ATP + H2O = pravastatin(out) + ADP + phosphate + H(+)</text>
        <dbReference type="Rhea" id="RHEA:63908"/>
        <dbReference type="ChEBI" id="CHEBI:15377"/>
        <dbReference type="ChEBI" id="CHEBI:15378"/>
        <dbReference type="ChEBI" id="CHEBI:30616"/>
        <dbReference type="ChEBI" id="CHEBI:43474"/>
        <dbReference type="ChEBI" id="CHEBI:63660"/>
        <dbReference type="ChEBI" id="CHEBI:456216"/>
    </reaction>
    <physiologicalReaction direction="left-to-right" evidence="3">
        <dbReference type="Rhea" id="RHEA:63909"/>
    </physiologicalReaction>
</comment>
<comment type="activity regulation">
    <text evidence="3">The uptake of taurocholate is inhibited by taurolithocholate sulfate with an IC(50) of 9 uM. Pravastatin competitively inhibits the transport of taurocholic acid. Cyclosporin A, glibenclamide, rifampicin and troglitazonestrongly competitively inhibit the transport activity of taurocholate. The canalicular transport activity of taurocholate is strongly dependent on canalicular membrane cholesterol content. The uptake of taurocholate is increased by short- and medium-chain fatty acids. Cholesterol increases transport capacity of taurocholate without affecting the affinity for the substrate.</text>
</comment>
<comment type="subunit">
    <text evidence="2 3">Interacts with HAX1 (By similarity). Interacts with the adapter protein complex 2 (AP-2) throught AP2A2 or AP2A1; this interaction regulates cell membrane expression of ABCB11 through its internalization in a clathrin-dependent manner and its subsequent degradation (By similarity).</text>
</comment>
<comment type="subcellular location">
    <subcellularLocation>
        <location evidence="2">Apical cell membrane</location>
        <topology evidence="2">Multi-pass membrane protein</topology>
    </subcellularLocation>
    <subcellularLocation>
        <location evidence="2">Recycling endosome membrane</location>
        <topology evidence="2">Multi-pass membrane protein</topology>
    </subcellularLocation>
    <subcellularLocation>
        <location evidence="2">Endosome</location>
    </subcellularLocation>
    <subcellularLocation>
        <location evidence="2">Cell membrane</location>
        <topology evidence="2">Multi-pass membrane protein</topology>
    </subcellularLocation>
    <text evidence="2 3">Internalized at the canalicular membrane through interaction with the adapter protein complex 2 (AP-2). At steady state, localizes in the canalicular membrane but is also present in recycling endosomes. ABCB11 constantly and rapidly exchanges between the two sites through tubulo-vesicles carriers that move along microtubules. Microtubule-dependent trafficking of ABCB11 is enhanced by taurocholate and cAMP and regulated by STK11 through a PKA-mediated pathway. Trafficking of newly synthesized ABCB11 through endosomal compartment to the bile canalicular membrane is accelerated by cAMP but not by taurocholate (By similarity). Cell membrane expression is up-regulated by short- and medium-chain fatty acids (By similarity).</text>
</comment>
<comment type="tissue specificity">
    <text>Expressed predominantly, if not exclusively in the liver, where it was further localized to the canalicular microvilli and to subcanalicular vesicles of the hepatocytes by in situ.</text>
</comment>
<comment type="domain">
    <text>Multifunctional polypeptide with two homologous halves, each containing a hydrophobic membrane-anchoring domain and an ATP binding cassette (ABC) domain.</text>
</comment>
<comment type="PTM">
    <text evidence="3">N-glycosylated.</text>
</comment>
<comment type="PTM">
    <text evidence="3">Ubiquitinated; short-chain ubiquitination regulates cell-Surface expression of ABCB11.</text>
</comment>
<comment type="similarity">
    <text evidence="10">Belongs to the ABC transporter superfamily. ABCB family. Multidrug resistance exporter (TC 3.A.1.201) subfamily.</text>
</comment>
<keyword id="KW-0067">ATP-binding</keyword>
<keyword id="KW-1003">Cell membrane</keyword>
<keyword id="KW-0967">Endosome</keyword>
<keyword id="KW-0325">Glycoprotein</keyword>
<keyword id="KW-0445">Lipid transport</keyword>
<keyword id="KW-0472">Membrane</keyword>
<keyword id="KW-0547">Nucleotide-binding</keyword>
<keyword id="KW-0597">Phosphoprotein</keyword>
<keyword id="KW-1185">Reference proteome</keyword>
<keyword id="KW-0677">Repeat</keyword>
<keyword id="KW-1278">Translocase</keyword>
<keyword id="KW-0812">Transmembrane</keyword>
<keyword id="KW-1133">Transmembrane helix</keyword>
<keyword id="KW-0813">Transport</keyword>
<keyword id="KW-0832">Ubl conjugation</keyword>
<dbReference type="EC" id="7.6.2.-" evidence="3"/>
<dbReference type="EMBL" id="AF249879">
    <property type="protein sequence ID" value="AAF65552.1"/>
    <property type="molecule type" value="mRNA"/>
</dbReference>
<dbReference type="RefSeq" id="NP_001075552.1">
    <property type="nucleotide sequence ID" value="NM_001082083.1"/>
</dbReference>
<dbReference type="SMR" id="Q9N0V3"/>
<dbReference type="FunCoup" id="Q9N0V3">
    <property type="interactions" value="45"/>
</dbReference>
<dbReference type="STRING" id="9986.ENSOCUP00000001184"/>
<dbReference type="GlyCosmos" id="Q9N0V3">
    <property type="glycosylation" value="4 sites, No reported glycans"/>
</dbReference>
<dbReference type="PaxDb" id="9986-ENSOCUP00000001184"/>
<dbReference type="GeneID" id="100008767"/>
<dbReference type="KEGG" id="ocu:100008767"/>
<dbReference type="CTD" id="8647"/>
<dbReference type="eggNOG" id="KOG0055">
    <property type="taxonomic scope" value="Eukaryota"/>
</dbReference>
<dbReference type="InParanoid" id="Q9N0V3"/>
<dbReference type="OrthoDB" id="6500128at2759"/>
<dbReference type="Proteomes" id="UP000001811">
    <property type="component" value="Unplaced"/>
</dbReference>
<dbReference type="GO" id="GO:0016324">
    <property type="term" value="C:apical plasma membrane"/>
    <property type="evidence" value="ECO:0000250"/>
    <property type="project" value="UniProtKB"/>
</dbReference>
<dbReference type="GO" id="GO:0009986">
    <property type="term" value="C:cell surface"/>
    <property type="evidence" value="ECO:0000250"/>
    <property type="project" value="UniProtKB"/>
</dbReference>
<dbReference type="GO" id="GO:0005768">
    <property type="term" value="C:endosome"/>
    <property type="evidence" value="ECO:0000250"/>
    <property type="project" value="UniProtKB"/>
</dbReference>
<dbReference type="GO" id="GO:0046691">
    <property type="term" value="C:intracellular canaliculus"/>
    <property type="evidence" value="ECO:0000250"/>
    <property type="project" value="UniProtKB"/>
</dbReference>
<dbReference type="GO" id="GO:0005743">
    <property type="term" value="C:mitochondrial inner membrane"/>
    <property type="evidence" value="ECO:0007669"/>
    <property type="project" value="TreeGrafter"/>
</dbReference>
<dbReference type="GO" id="GO:0005886">
    <property type="term" value="C:plasma membrane"/>
    <property type="evidence" value="ECO:0000315"/>
    <property type="project" value="UniProtKB"/>
</dbReference>
<dbReference type="GO" id="GO:0055037">
    <property type="term" value="C:recycling endosome"/>
    <property type="evidence" value="ECO:0000250"/>
    <property type="project" value="UniProtKB"/>
</dbReference>
<dbReference type="GO" id="GO:0055038">
    <property type="term" value="C:recycling endosome membrane"/>
    <property type="evidence" value="ECO:0000250"/>
    <property type="project" value="UniProtKB"/>
</dbReference>
<dbReference type="GO" id="GO:0015432">
    <property type="term" value="F:ABC-type bile acid transporter activity"/>
    <property type="evidence" value="ECO:0000250"/>
    <property type="project" value="UniProtKB"/>
</dbReference>
<dbReference type="GO" id="GO:0015421">
    <property type="term" value="F:ABC-type oligopeptide transporter activity"/>
    <property type="evidence" value="ECO:0007669"/>
    <property type="project" value="TreeGrafter"/>
</dbReference>
<dbReference type="GO" id="GO:0008559">
    <property type="term" value="F:ABC-type xenobiotic transporter activity"/>
    <property type="evidence" value="ECO:0000250"/>
    <property type="project" value="UniProtKB"/>
</dbReference>
<dbReference type="GO" id="GO:0005524">
    <property type="term" value="F:ATP binding"/>
    <property type="evidence" value="ECO:0007669"/>
    <property type="project" value="UniProtKB-KW"/>
</dbReference>
<dbReference type="GO" id="GO:0016887">
    <property type="term" value="F:ATP hydrolysis activity"/>
    <property type="evidence" value="ECO:0007669"/>
    <property type="project" value="InterPro"/>
</dbReference>
<dbReference type="GO" id="GO:0015125">
    <property type="term" value="F:bile acid transmembrane transporter activity"/>
    <property type="evidence" value="ECO:0000315"/>
    <property type="project" value="UniProtKB"/>
</dbReference>
<dbReference type="GO" id="GO:0015126">
    <property type="term" value="F:canalicular bile acid transmembrane transporter activity"/>
    <property type="evidence" value="ECO:0000250"/>
    <property type="project" value="UniProtKB"/>
</dbReference>
<dbReference type="GO" id="GO:0015721">
    <property type="term" value="P:bile acid and bile salt transport"/>
    <property type="evidence" value="ECO:0000250"/>
    <property type="project" value="UniProtKB"/>
</dbReference>
<dbReference type="GO" id="GO:0008206">
    <property type="term" value="P:bile acid metabolic process"/>
    <property type="evidence" value="ECO:0000250"/>
    <property type="project" value="UniProtKB"/>
</dbReference>
<dbReference type="GO" id="GO:0015722">
    <property type="term" value="P:canalicular bile acid transport"/>
    <property type="evidence" value="ECO:0000315"/>
    <property type="project" value="UniProtKB"/>
</dbReference>
<dbReference type="GO" id="GO:0042632">
    <property type="term" value="P:cholesterol homeostasis"/>
    <property type="evidence" value="ECO:0000250"/>
    <property type="project" value="UniProtKB"/>
</dbReference>
<dbReference type="GO" id="GO:0006631">
    <property type="term" value="P:fatty acid metabolic process"/>
    <property type="evidence" value="ECO:0000250"/>
    <property type="project" value="UniProtKB"/>
</dbReference>
<dbReference type="GO" id="GO:0055088">
    <property type="term" value="P:lipid homeostasis"/>
    <property type="evidence" value="ECO:0000250"/>
    <property type="project" value="UniProtKB"/>
</dbReference>
<dbReference type="GO" id="GO:0090374">
    <property type="term" value="P:oligopeptide export from mitochondrion"/>
    <property type="evidence" value="ECO:0007669"/>
    <property type="project" value="TreeGrafter"/>
</dbReference>
<dbReference type="GO" id="GO:0055091">
    <property type="term" value="P:phospholipid homeostasis"/>
    <property type="evidence" value="ECO:0000250"/>
    <property type="project" value="UniProtKB"/>
</dbReference>
<dbReference type="GO" id="GO:0120189">
    <property type="term" value="P:positive regulation of bile acid secretion"/>
    <property type="evidence" value="ECO:0000250"/>
    <property type="project" value="UniProtKB"/>
</dbReference>
<dbReference type="GO" id="GO:0016567">
    <property type="term" value="P:protein ubiquitination"/>
    <property type="evidence" value="ECO:0000250"/>
    <property type="project" value="UniProtKB"/>
</dbReference>
<dbReference type="GO" id="GO:1904251">
    <property type="term" value="P:regulation of bile acid metabolic process"/>
    <property type="evidence" value="ECO:0000250"/>
    <property type="project" value="UniProtKB"/>
</dbReference>
<dbReference type="GO" id="GO:0031998">
    <property type="term" value="P:regulation of fatty acid beta-oxidation"/>
    <property type="evidence" value="ECO:0000250"/>
    <property type="project" value="UniProtKB"/>
</dbReference>
<dbReference type="GO" id="GO:0046618">
    <property type="term" value="P:xenobiotic export from cell"/>
    <property type="evidence" value="ECO:0000250"/>
    <property type="project" value="UniProtKB"/>
</dbReference>
<dbReference type="GO" id="GO:0006805">
    <property type="term" value="P:xenobiotic metabolic process"/>
    <property type="evidence" value="ECO:0000250"/>
    <property type="project" value="UniProtKB"/>
</dbReference>
<dbReference type="GO" id="GO:0006855">
    <property type="term" value="P:xenobiotic transmembrane transport"/>
    <property type="evidence" value="ECO:0000250"/>
    <property type="project" value="UniProtKB"/>
</dbReference>
<dbReference type="CDD" id="cd18577">
    <property type="entry name" value="ABC_6TM_Pgp_ABCB1_D1_like"/>
    <property type="match status" value="1"/>
</dbReference>
<dbReference type="CDD" id="cd18578">
    <property type="entry name" value="ABC_6TM_Pgp_ABCB1_D2_like"/>
    <property type="match status" value="1"/>
</dbReference>
<dbReference type="CDD" id="cd03249">
    <property type="entry name" value="ABC_MTABC3_MDL1_MDL2"/>
    <property type="match status" value="1"/>
</dbReference>
<dbReference type="FunFam" id="1.20.1560.10:FF:000018">
    <property type="entry name" value="ATP-binding cassette subfamily B member 11"/>
    <property type="match status" value="1"/>
</dbReference>
<dbReference type="FunFam" id="1.20.1560.10:FF:000046">
    <property type="entry name" value="ATP-binding cassette subfamily B member 11"/>
    <property type="match status" value="1"/>
</dbReference>
<dbReference type="FunFam" id="1.20.1560.10:FF:000051">
    <property type="entry name" value="ATP-binding cassette subfamily B member 11"/>
    <property type="match status" value="1"/>
</dbReference>
<dbReference type="FunFam" id="3.40.50.300:FF:000479">
    <property type="entry name" value="Multidrug resistance protein 1A"/>
    <property type="match status" value="2"/>
</dbReference>
<dbReference type="Gene3D" id="1.20.1560.10">
    <property type="entry name" value="ABC transporter type 1, transmembrane domain"/>
    <property type="match status" value="1"/>
</dbReference>
<dbReference type="Gene3D" id="3.40.50.300">
    <property type="entry name" value="P-loop containing nucleotide triphosphate hydrolases"/>
    <property type="match status" value="2"/>
</dbReference>
<dbReference type="InterPro" id="IPR003593">
    <property type="entry name" value="AAA+_ATPase"/>
</dbReference>
<dbReference type="InterPro" id="IPR011527">
    <property type="entry name" value="ABC1_TM_dom"/>
</dbReference>
<dbReference type="InterPro" id="IPR036640">
    <property type="entry name" value="ABC1_TM_sf"/>
</dbReference>
<dbReference type="InterPro" id="IPR003439">
    <property type="entry name" value="ABC_transporter-like_ATP-bd"/>
</dbReference>
<dbReference type="InterPro" id="IPR017871">
    <property type="entry name" value="ABC_transporter-like_CS"/>
</dbReference>
<dbReference type="InterPro" id="IPR027417">
    <property type="entry name" value="P-loop_NTPase"/>
</dbReference>
<dbReference type="InterPro" id="IPR039421">
    <property type="entry name" value="Type_1_exporter"/>
</dbReference>
<dbReference type="PANTHER" id="PTHR43394:SF23">
    <property type="entry name" value="ATP-BINDING CASSETTE SUBFAMILY B MEMBER 11, GENE 2"/>
    <property type="match status" value="1"/>
</dbReference>
<dbReference type="PANTHER" id="PTHR43394">
    <property type="entry name" value="ATP-DEPENDENT PERMEASE MDL1, MITOCHONDRIAL"/>
    <property type="match status" value="1"/>
</dbReference>
<dbReference type="Pfam" id="PF00664">
    <property type="entry name" value="ABC_membrane"/>
    <property type="match status" value="2"/>
</dbReference>
<dbReference type="Pfam" id="PF00005">
    <property type="entry name" value="ABC_tran"/>
    <property type="match status" value="2"/>
</dbReference>
<dbReference type="SMART" id="SM00382">
    <property type="entry name" value="AAA"/>
    <property type="match status" value="2"/>
</dbReference>
<dbReference type="SUPFAM" id="SSF90123">
    <property type="entry name" value="ABC transporter transmembrane region"/>
    <property type="match status" value="2"/>
</dbReference>
<dbReference type="SUPFAM" id="SSF52540">
    <property type="entry name" value="P-loop containing nucleoside triphosphate hydrolases"/>
    <property type="match status" value="2"/>
</dbReference>
<dbReference type="PROSITE" id="PS50929">
    <property type="entry name" value="ABC_TM1F"/>
    <property type="match status" value="2"/>
</dbReference>
<dbReference type="PROSITE" id="PS00211">
    <property type="entry name" value="ABC_TRANSPORTER_1"/>
    <property type="match status" value="1"/>
</dbReference>
<dbReference type="PROSITE" id="PS50893">
    <property type="entry name" value="ABC_TRANSPORTER_2"/>
    <property type="match status" value="2"/>
</dbReference>
<gene>
    <name evidence="3" type="primary">ABCB11</name>
    <name evidence="9" type="synonym">BSEP</name>
    <name evidence="9" type="synonym">SPGP</name>
</gene>
<evidence type="ECO:0000250" key="1"/>
<evidence type="ECO:0000250" key="2">
    <source>
        <dbReference type="UniProtKB" id="O70127"/>
    </source>
</evidence>
<evidence type="ECO:0000250" key="3">
    <source>
        <dbReference type="UniProtKB" id="O95342"/>
    </source>
</evidence>
<evidence type="ECO:0000250" key="4">
    <source>
        <dbReference type="UniProtKB" id="Q9QY30"/>
    </source>
</evidence>
<evidence type="ECO:0000255" key="5"/>
<evidence type="ECO:0000255" key="6">
    <source>
        <dbReference type="PROSITE-ProRule" id="PRU00434"/>
    </source>
</evidence>
<evidence type="ECO:0000255" key="7">
    <source>
        <dbReference type="PROSITE-ProRule" id="PRU00441"/>
    </source>
</evidence>
<evidence type="ECO:0000256" key="8">
    <source>
        <dbReference type="SAM" id="MobiDB-lite"/>
    </source>
</evidence>
<evidence type="ECO:0000303" key="9">
    <source ref="1"/>
</evidence>
<evidence type="ECO:0000305" key="10"/>
<name>ABCBB_RABIT</name>
<organism>
    <name type="scientific">Oryctolagus cuniculus</name>
    <name type="common">Rabbit</name>
    <dbReference type="NCBI Taxonomy" id="9986"/>
    <lineage>
        <taxon>Eukaryota</taxon>
        <taxon>Metazoa</taxon>
        <taxon>Chordata</taxon>
        <taxon>Craniata</taxon>
        <taxon>Vertebrata</taxon>
        <taxon>Euteleostomi</taxon>
        <taxon>Mammalia</taxon>
        <taxon>Eutheria</taxon>
        <taxon>Euarchontoglires</taxon>
        <taxon>Glires</taxon>
        <taxon>Lagomorpha</taxon>
        <taxon>Leporidae</taxon>
        <taxon>Oryctolagus</taxon>
    </lineage>
</organism>
<proteinExistence type="evidence at transcript level"/>
<feature type="chain" id="PRO_0000093298" description="Bile salt export pump">
    <location>
        <begin position="1"/>
        <end position="1321"/>
    </location>
</feature>
<feature type="topological domain" description="Cytoplasmic" evidence="5">
    <location>
        <begin position="1"/>
        <end position="62"/>
    </location>
</feature>
<feature type="transmembrane region" description="Helical" evidence="7">
    <location>
        <begin position="63"/>
        <end position="83"/>
    </location>
</feature>
<feature type="topological domain" description="Extracellular" evidence="5">
    <location>
        <begin position="84"/>
        <end position="147"/>
    </location>
</feature>
<feature type="transmembrane region" description="Helical" evidence="7">
    <location>
        <begin position="148"/>
        <end position="168"/>
    </location>
</feature>
<feature type="topological domain" description="Cytoplasmic" evidence="5">
    <location>
        <begin position="169"/>
        <end position="215"/>
    </location>
</feature>
<feature type="transmembrane region" description="Helical" evidence="7">
    <location>
        <begin position="216"/>
        <end position="236"/>
    </location>
</feature>
<feature type="topological domain" description="Extracellular" evidence="5">
    <location>
        <begin position="237"/>
        <end position="240"/>
    </location>
</feature>
<feature type="transmembrane region" description="Helical" evidence="7">
    <location>
        <begin position="241"/>
        <end position="261"/>
    </location>
</feature>
<feature type="topological domain" description="Cytoplasmic" evidence="5">
    <location>
        <begin position="262"/>
        <end position="319"/>
    </location>
</feature>
<feature type="transmembrane region" description="Helical" evidence="7">
    <location>
        <begin position="320"/>
        <end position="340"/>
    </location>
</feature>
<feature type="topological domain" description="Extracellular" evidence="5">
    <location>
        <begin position="341"/>
        <end position="353"/>
    </location>
</feature>
<feature type="transmembrane region" description="Helical" evidence="7">
    <location>
        <begin position="354"/>
        <end position="374"/>
    </location>
</feature>
<feature type="topological domain" description="Cytoplasmic" evidence="5">
    <location>
        <begin position="375"/>
        <end position="755"/>
    </location>
</feature>
<feature type="transmembrane region" description="Helical" evidence="7">
    <location>
        <begin position="756"/>
        <end position="776"/>
    </location>
</feature>
<feature type="topological domain" description="Extracellular" evidence="5">
    <location>
        <begin position="777"/>
        <end position="794"/>
    </location>
</feature>
<feature type="transmembrane region" description="Helical" evidence="7">
    <location>
        <begin position="795"/>
        <end position="815"/>
    </location>
</feature>
<feature type="topological domain" description="Cytoplasmic" evidence="5">
    <location>
        <begin position="816"/>
        <end position="869"/>
    </location>
</feature>
<feature type="transmembrane region" description="Helical" evidence="7">
    <location>
        <begin position="870"/>
        <end position="890"/>
    </location>
</feature>
<feature type="transmembrane region" description="Helical" evidence="7">
    <location>
        <begin position="891"/>
        <end position="911"/>
    </location>
</feature>
<feature type="topological domain" description="Cytoplasmic" evidence="5">
    <location>
        <begin position="912"/>
        <end position="979"/>
    </location>
</feature>
<feature type="transmembrane region" description="Helical" evidence="7">
    <location>
        <begin position="980"/>
        <end position="1000"/>
    </location>
</feature>
<feature type="topological domain" description="Extracellular" evidence="5">
    <location>
        <begin position="1001"/>
        <end position="1011"/>
    </location>
</feature>
<feature type="transmembrane region" description="Helical" evidence="7">
    <location>
        <begin position="1012"/>
        <end position="1032"/>
    </location>
</feature>
<feature type="topological domain" description="Cytoplasmic" evidence="5">
    <location>
        <begin position="1033"/>
        <end position="1321"/>
    </location>
</feature>
<feature type="domain" description="ABC transmembrane type-1 1" evidence="7">
    <location>
        <begin position="62"/>
        <end position="385"/>
    </location>
</feature>
<feature type="domain" description="ABC transporter 1" evidence="6">
    <location>
        <begin position="420"/>
        <end position="656"/>
    </location>
</feature>
<feature type="domain" description="ABC transmembrane type-1 2" evidence="7">
    <location>
        <begin position="755"/>
        <end position="1043"/>
    </location>
</feature>
<feature type="domain" description="ABC transporter 2" evidence="6">
    <location>
        <begin position="1078"/>
        <end position="1316"/>
    </location>
</feature>
<feature type="region of interest" description="Interaction with HAX1" evidence="1">
    <location>
        <begin position="651"/>
        <end position="672"/>
    </location>
</feature>
<feature type="region of interest" description="Disordered" evidence="8">
    <location>
        <begin position="659"/>
        <end position="735"/>
    </location>
</feature>
<feature type="compositionally biased region" description="Acidic residues" evidence="8">
    <location>
        <begin position="664"/>
        <end position="677"/>
    </location>
</feature>
<feature type="compositionally biased region" description="Basic and acidic residues" evidence="8">
    <location>
        <begin position="714"/>
        <end position="731"/>
    </location>
</feature>
<feature type="binding site" evidence="6">
    <location>
        <begin position="455"/>
        <end position="462"/>
    </location>
    <ligand>
        <name>ATP</name>
        <dbReference type="ChEBI" id="CHEBI:30616"/>
        <label>1</label>
    </ligand>
</feature>
<feature type="binding site" evidence="6">
    <location>
        <begin position="1113"/>
        <end position="1120"/>
    </location>
    <ligand>
        <name>ATP</name>
        <dbReference type="ChEBI" id="CHEBI:30616"/>
        <label>2</label>
    </ligand>
</feature>
<feature type="modified residue" description="Phosphothreonine" evidence="3">
    <location>
        <position position="586"/>
    </location>
</feature>
<feature type="modified residue" description="Phosphoserine" evidence="3">
    <location>
        <position position="587"/>
    </location>
</feature>
<feature type="modified residue" description="Phosphoserine" evidence="4">
    <location>
        <position position="690"/>
    </location>
</feature>
<feature type="modified residue" description="Phosphoserine" evidence="2">
    <location>
        <position position="701"/>
    </location>
</feature>
<feature type="modified residue" description="Phosphoserine" evidence="3">
    <location>
        <position position="704"/>
    </location>
</feature>
<feature type="modified residue" description="Phosphoserine" evidence="3">
    <location>
        <position position="1214"/>
    </location>
</feature>
<feature type="modified residue" description="Phosphoserine" evidence="2">
    <location>
        <position position="1321"/>
    </location>
</feature>
<feature type="glycosylation site" description="N-linked (GlcNAc...) asparagine" evidence="5">
    <location>
        <position position="109"/>
    </location>
</feature>
<feature type="glycosylation site" description="N-linked (GlcNAc...) asparagine" evidence="5">
    <location>
        <position position="116"/>
    </location>
</feature>
<feature type="glycosylation site" description="N-linked (GlcNAc...) asparagine" evidence="5">
    <location>
        <position position="122"/>
    </location>
</feature>
<feature type="glycosylation site" description="N-linked (GlcNAc...) asparagine" evidence="5">
    <location>
        <position position="125"/>
    </location>
</feature>
<protein>
    <recommendedName>
        <fullName evidence="9">Bile salt export pump</fullName>
        <ecNumber evidence="3">7.6.2.-</ecNumber>
    </recommendedName>
    <alternativeName>
        <fullName>ATP-binding cassette sub-family B member 11</fullName>
    </alternativeName>
    <alternativeName>
        <fullName>Sister of P-glycoprotein</fullName>
    </alternativeName>
</protein>